<protein>
    <recommendedName>
        <fullName evidence="1">UPF0154 protein SH1564</fullName>
    </recommendedName>
</protein>
<name>Y1564_STAHJ</name>
<feature type="chain" id="PRO_0000214981" description="UPF0154 protein SH1564">
    <location>
        <begin position="1"/>
        <end position="80"/>
    </location>
</feature>
<feature type="transmembrane region" description="Helical" evidence="1">
    <location>
        <begin position="4"/>
        <end position="24"/>
    </location>
</feature>
<sequence>MATWLAILLIIVALIGGLVGGFFLARKYMMDYLKKNPPINEEMLRMMMMQMGQKPSQKKINQMMTMMNKNMDQNMKSSKK</sequence>
<organism>
    <name type="scientific">Staphylococcus haemolyticus (strain JCSC1435)</name>
    <dbReference type="NCBI Taxonomy" id="279808"/>
    <lineage>
        <taxon>Bacteria</taxon>
        <taxon>Bacillati</taxon>
        <taxon>Bacillota</taxon>
        <taxon>Bacilli</taxon>
        <taxon>Bacillales</taxon>
        <taxon>Staphylococcaceae</taxon>
        <taxon>Staphylococcus</taxon>
    </lineage>
</organism>
<gene>
    <name type="ordered locus">SH1564</name>
</gene>
<accession>Q4L652</accession>
<reference key="1">
    <citation type="journal article" date="2005" name="J. Bacteriol.">
        <title>Whole-genome sequencing of Staphylococcus haemolyticus uncovers the extreme plasticity of its genome and the evolution of human-colonizing staphylococcal species.</title>
        <authorList>
            <person name="Takeuchi F."/>
            <person name="Watanabe S."/>
            <person name="Baba T."/>
            <person name="Yuzawa H."/>
            <person name="Ito T."/>
            <person name="Morimoto Y."/>
            <person name="Kuroda M."/>
            <person name="Cui L."/>
            <person name="Takahashi M."/>
            <person name="Ankai A."/>
            <person name="Baba S."/>
            <person name="Fukui S."/>
            <person name="Lee J.C."/>
            <person name="Hiramatsu K."/>
        </authorList>
    </citation>
    <scope>NUCLEOTIDE SEQUENCE [LARGE SCALE GENOMIC DNA]</scope>
    <source>
        <strain>JCSC1435</strain>
    </source>
</reference>
<proteinExistence type="inferred from homology"/>
<comment type="subcellular location">
    <subcellularLocation>
        <location evidence="1">Membrane</location>
        <topology evidence="1">Single-pass membrane protein</topology>
    </subcellularLocation>
</comment>
<comment type="similarity">
    <text evidence="1">Belongs to the UPF0154 family.</text>
</comment>
<evidence type="ECO:0000255" key="1">
    <source>
        <dbReference type="HAMAP-Rule" id="MF_00363"/>
    </source>
</evidence>
<keyword id="KW-0472">Membrane</keyword>
<keyword id="KW-0812">Transmembrane</keyword>
<keyword id="KW-1133">Transmembrane helix</keyword>
<dbReference type="EMBL" id="AP006716">
    <property type="protein sequence ID" value="BAE04873.1"/>
    <property type="molecule type" value="Genomic_DNA"/>
</dbReference>
<dbReference type="RefSeq" id="WP_011275855.1">
    <property type="nucleotide sequence ID" value="NC_007168.1"/>
</dbReference>
<dbReference type="SMR" id="Q4L652"/>
<dbReference type="KEGG" id="sha:SH1564"/>
<dbReference type="eggNOG" id="COG3763">
    <property type="taxonomic scope" value="Bacteria"/>
</dbReference>
<dbReference type="HOGENOM" id="CLU_180108_0_1_9"/>
<dbReference type="Proteomes" id="UP000000543">
    <property type="component" value="Chromosome"/>
</dbReference>
<dbReference type="GO" id="GO:0005886">
    <property type="term" value="C:plasma membrane"/>
    <property type="evidence" value="ECO:0007669"/>
    <property type="project" value="UniProtKB-UniRule"/>
</dbReference>
<dbReference type="Gene3D" id="1.10.238.10">
    <property type="entry name" value="EF-hand"/>
    <property type="match status" value="1"/>
</dbReference>
<dbReference type="HAMAP" id="MF_00363">
    <property type="entry name" value="UPF0154"/>
    <property type="match status" value="1"/>
</dbReference>
<dbReference type="InterPro" id="IPR011992">
    <property type="entry name" value="EF-hand-dom_pair"/>
</dbReference>
<dbReference type="InterPro" id="IPR005359">
    <property type="entry name" value="UPF0154"/>
</dbReference>
<dbReference type="Pfam" id="PF03672">
    <property type="entry name" value="UPF0154"/>
    <property type="match status" value="1"/>
</dbReference>
<dbReference type="SUPFAM" id="SSF47473">
    <property type="entry name" value="EF-hand"/>
    <property type="match status" value="1"/>
</dbReference>